<reference key="1">
    <citation type="journal article" date="1998" name="J. Biol. Chem.">
        <title>Metabolism of ferulic acid to vanillin. A bacterial gene of the enoyl-SCoA hydratase/isomerase superfamily encodes an enzyme for the hydration and cleavage of a hydroxycinnamic acid SCoA thioester.</title>
        <authorList>
            <person name="Gasson M.J."/>
            <person name="Kitamura Y."/>
            <person name="McLauchlan W.R."/>
            <person name="Narbad A."/>
            <person name="Parr A.J."/>
            <person name="Parsons E.L."/>
            <person name="Payne J."/>
            <person name="Rhodes M.J."/>
            <person name="Walton N.J."/>
        </authorList>
    </citation>
    <scope>NUCLEOTIDE SEQUENCE [GENOMIC DNA]</scope>
    <scope>IDENTIFICATION</scope>
    <source>
        <strain>AN103</strain>
    </source>
</reference>
<keyword id="KW-0520">NAD</keyword>
<keyword id="KW-0560">Oxidoreductase</keyword>
<sequence length="482" mass="50440">MLDVPLLIGGQSCPARDGRTFERRNPVTGELVSRVAAATLEDADAAVAAAQQAFPAWAALAPNERRSRLLKAAEQLQARSGEFIEAAGETGAMANWYGFNVRLAANMLREAASMTTQVNGEVIPSDVPGSFAMALRQPCGVVLGIAPWNAPVILATRAIAMPLACGNTVVLKASELSPAVHRLIGQVLQDAGLGDGVVNVISNAPADAAQIVERLIANPAVRRVNFTGSTHVGRIVGELSARHLKPALLELGGKAPLLVLDDADLEAAVQAAAFGAYFNQGQICMSTERLIVDAKVADAFVAQLAAKVETLRAGDPADPESVLGSLVDASAGTRIKALIDDAVAKGARLVIGGQLEGSILQPTLLDGVDASMRLYREESFGPVAVVLRGEGEEALLQLANDSEFGLSAAIFSRDTGRALALAQRVESGICHINGPTVHDEAQMPFGGVKSSGYGSFGGKASIEHFTQLRWVTLQNGPRHYPI</sequence>
<proteinExistence type="inferred from homology"/>
<dbReference type="EC" id="1.2.1.67"/>
<dbReference type="EMBL" id="Y13067">
    <property type="protein sequence ID" value="CAA73503.1"/>
    <property type="molecule type" value="Genomic_DNA"/>
</dbReference>
<dbReference type="SMR" id="O69763"/>
<dbReference type="eggNOG" id="COG1012">
    <property type="taxonomic scope" value="Bacteria"/>
</dbReference>
<dbReference type="GO" id="GO:0050608">
    <property type="term" value="F:vanillin dehydrogenase activity"/>
    <property type="evidence" value="ECO:0007669"/>
    <property type="project" value="UniProtKB-EC"/>
</dbReference>
<dbReference type="CDD" id="cd07105">
    <property type="entry name" value="ALDH_SaliADH"/>
    <property type="match status" value="1"/>
</dbReference>
<dbReference type="FunFam" id="3.40.309.10:FF:000010">
    <property type="entry name" value="Gamma-aminobutyraldehyde dehydrogenase"/>
    <property type="match status" value="1"/>
</dbReference>
<dbReference type="Gene3D" id="3.40.605.10">
    <property type="entry name" value="Aldehyde Dehydrogenase, Chain A, domain 1"/>
    <property type="match status" value="1"/>
</dbReference>
<dbReference type="Gene3D" id="3.40.309.10">
    <property type="entry name" value="Aldehyde Dehydrogenase, Chain A, domain 2"/>
    <property type="match status" value="1"/>
</dbReference>
<dbReference type="InterPro" id="IPR016161">
    <property type="entry name" value="Ald_DH/histidinol_DH"/>
</dbReference>
<dbReference type="InterPro" id="IPR016163">
    <property type="entry name" value="Ald_DH_C"/>
</dbReference>
<dbReference type="InterPro" id="IPR029510">
    <property type="entry name" value="Ald_DH_CS_GLU"/>
</dbReference>
<dbReference type="InterPro" id="IPR016162">
    <property type="entry name" value="Ald_DH_N"/>
</dbReference>
<dbReference type="InterPro" id="IPR015590">
    <property type="entry name" value="Aldehyde_DH_dom"/>
</dbReference>
<dbReference type="PANTHER" id="PTHR42986">
    <property type="entry name" value="BENZALDEHYDE DEHYDROGENASE YFMT"/>
    <property type="match status" value="1"/>
</dbReference>
<dbReference type="PANTHER" id="PTHR42986:SF1">
    <property type="entry name" value="BENZALDEHYDE DEHYDROGENASE YFMT"/>
    <property type="match status" value="1"/>
</dbReference>
<dbReference type="Pfam" id="PF00171">
    <property type="entry name" value="Aldedh"/>
    <property type="match status" value="1"/>
</dbReference>
<dbReference type="SUPFAM" id="SSF53720">
    <property type="entry name" value="ALDH-like"/>
    <property type="match status" value="1"/>
</dbReference>
<dbReference type="PROSITE" id="PS00687">
    <property type="entry name" value="ALDEHYDE_DEHYDR_GLU"/>
    <property type="match status" value="1"/>
</dbReference>
<accession>O69763</accession>
<evidence type="ECO:0000250" key="1"/>
<evidence type="ECO:0000255" key="2">
    <source>
        <dbReference type="PROSITE-ProRule" id="PRU10007"/>
    </source>
</evidence>
<evidence type="ECO:0000305" key="3"/>
<feature type="chain" id="PRO_0000418953" description="Vanillin dehydrogenase">
    <location>
        <begin position="1"/>
        <end position="482"/>
    </location>
</feature>
<feature type="active site" evidence="2">
    <location>
        <position position="250"/>
    </location>
</feature>
<feature type="active site" evidence="2">
    <location>
        <position position="284"/>
    </location>
</feature>
<feature type="binding site" evidence="1">
    <location>
        <begin position="228"/>
        <end position="233"/>
    </location>
    <ligand>
        <name>NAD(+)</name>
        <dbReference type="ChEBI" id="CHEBI:57540"/>
    </ligand>
</feature>
<protein>
    <recommendedName>
        <fullName>Vanillin dehydrogenase</fullName>
        <ecNumber>1.2.1.67</ecNumber>
    </recommendedName>
</protein>
<name>VDH_PSEFL</name>
<organism>
    <name type="scientific">Pseudomonas fluorescens</name>
    <dbReference type="NCBI Taxonomy" id="294"/>
    <lineage>
        <taxon>Bacteria</taxon>
        <taxon>Pseudomonadati</taxon>
        <taxon>Pseudomonadota</taxon>
        <taxon>Gammaproteobacteria</taxon>
        <taxon>Pseudomonadales</taxon>
        <taxon>Pseudomonadaceae</taxon>
        <taxon>Pseudomonas</taxon>
    </lineage>
</organism>
<gene>
    <name type="primary">vdh</name>
</gene>
<comment type="function">
    <text evidence="1">Catalyzes the NAD-dependent oxidation of vanillin to vanillic acid.</text>
</comment>
<comment type="catalytic activity">
    <reaction>
        <text>vanillin + NAD(+) + H2O = vanillate + NADH + 2 H(+)</text>
        <dbReference type="Rhea" id="RHEA:13309"/>
        <dbReference type="ChEBI" id="CHEBI:15377"/>
        <dbReference type="ChEBI" id="CHEBI:15378"/>
        <dbReference type="ChEBI" id="CHEBI:16632"/>
        <dbReference type="ChEBI" id="CHEBI:18346"/>
        <dbReference type="ChEBI" id="CHEBI:57540"/>
        <dbReference type="ChEBI" id="CHEBI:57945"/>
        <dbReference type="EC" id="1.2.1.67"/>
    </reaction>
</comment>
<comment type="similarity">
    <text evidence="3">Belongs to the aldehyde dehydrogenase family.</text>
</comment>